<dbReference type="EC" id="2.5.1.145" evidence="1"/>
<dbReference type="EMBL" id="CP000036">
    <property type="protein sequence ID" value="ABB67249.1"/>
    <property type="molecule type" value="Genomic_DNA"/>
</dbReference>
<dbReference type="RefSeq" id="WP_000204659.1">
    <property type="nucleotide sequence ID" value="NC_007613.1"/>
</dbReference>
<dbReference type="SMR" id="Q31XF9"/>
<dbReference type="KEGG" id="sbo:SBO_2720"/>
<dbReference type="HOGENOM" id="CLU_013386_1_0_6"/>
<dbReference type="UniPathway" id="UPA00664"/>
<dbReference type="Proteomes" id="UP000007067">
    <property type="component" value="Chromosome"/>
</dbReference>
<dbReference type="GO" id="GO:0005886">
    <property type="term" value="C:plasma membrane"/>
    <property type="evidence" value="ECO:0007669"/>
    <property type="project" value="UniProtKB-SubCell"/>
</dbReference>
<dbReference type="GO" id="GO:0008961">
    <property type="term" value="F:phosphatidylglycerol-prolipoprotein diacylglyceryl transferase activity"/>
    <property type="evidence" value="ECO:0007669"/>
    <property type="project" value="UniProtKB-UniRule"/>
</dbReference>
<dbReference type="GO" id="GO:0042158">
    <property type="term" value="P:lipoprotein biosynthetic process"/>
    <property type="evidence" value="ECO:0007669"/>
    <property type="project" value="UniProtKB-UniRule"/>
</dbReference>
<dbReference type="HAMAP" id="MF_01147">
    <property type="entry name" value="Lgt"/>
    <property type="match status" value="1"/>
</dbReference>
<dbReference type="InterPro" id="IPR001640">
    <property type="entry name" value="Lgt"/>
</dbReference>
<dbReference type="NCBIfam" id="TIGR00544">
    <property type="entry name" value="lgt"/>
    <property type="match status" value="1"/>
</dbReference>
<dbReference type="PANTHER" id="PTHR30589:SF0">
    <property type="entry name" value="PHOSPHATIDYLGLYCEROL--PROLIPOPROTEIN DIACYLGLYCERYL TRANSFERASE"/>
    <property type="match status" value="1"/>
</dbReference>
<dbReference type="PANTHER" id="PTHR30589">
    <property type="entry name" value="PROLIPOPROTEIN DIACYLGLYCERYL TRANSFERASE"/>
    <property type="match status" value="1"/>
</dbReference>
<dbReference type="Pfam" id="PF01790">
    <property type="entry name" value="LGT"/>
    <property type="match status" value="1"/>
</dbReference>
<dbReference type="PROSITE" id="PS01311">
    <property type="entry name" value="LGT"/>
    <property type="match status" value="1"/>
</dbReference>
<name>LGT_SHIBS</name>
<comment type="function">
    <text evidence="1">Catalyzes the transfer of the diacylglyceryl group from phosphatidylglycerol to the sulfhydryl group of the N-terminal cysteine of a prolipoprotein, the first step in the formation of mature lipoproteins.</text>
</comment>
<comment type="catalytic activity">
    <reaction evidence="1">
        <text>L-cysteinyl-[prolipoprotein] + a 1,2-diacyl-sn-glycero-3-phospho-(1'-sn-glycerol) = an S-1,2-diacyl-sn-glyceryl-L-cysteinyl-[prolipoprotein] + sn-glycerol 1-phosphate + H(+)</text>
        <dbReference type="Rhea" id="RHEA:56712"/>
        <dbReference type="Rhea" id="RHEA-COMP:14679"/>
        <dbReference type="Rhea" id="RHEA-COMP:14680"/>
        <dbReference type="ChEBI" id="CHEBI:15378"/>
        <dbReference type="ChEBI" id="CHEBI:29950"/>
        <dbReference type="ChEBI" id="CHEBI:57685"/>
        <dbReference type="ChEBI" id="CHEBI:64716"/>
        <dbReference type="ChEBI" id="CHEBI:140658"/>
        <dbReference type="EC" id="2.5.1.145"/>
    </reaction>
</comment>
<comment type="pathway">
    <text evidence="1">Protein modification; lipoprotein biosynthesis (diacylglyceryl transfer).</text>
</comment>
<comment type="subcellular location">
    <subcellularLocation>
        <location evidence="1">Cell inner membrane</location>
        <topology evidence="1">Multi-pass membrane protein</topology>
    </subcellularLocation>
</comment>
<comment type="similarity">
    <text evidence="1">Belongs to the Lgt family.</text>
</comment>
<reference key="1">
    <citation type="journal article" date="2005" name="Nucleic Acids Res.">
        <title>Genome dynamics and diversity of Shigella species, the etiologic agents of bacillary dysentery.</title>
        <authorList>
            <person name="Yang F."/>
            <person name="Yang J."/>
            <person name="Zhang X."/>
            <person name="Chen L."/>
            <person name="Jiang Y."/>
            <person name="Yan Y."/>
            <person name="Tang X."/>
            <person name="Wang J."/>
            <person name="Xiong Z."/>
            <person name="Dong J."/>
            <person name="Xue Y."/>
            <person name="Zhu Y."/>
            <person name="Xu X."/>
            <person name="Sun L."/>
            <person name="Chen S."/>
            <person name="Nie H."/>
            <person name="Peng J."/>
            <person name="Xu J."/>
            <person name="Wang Y."/>
            <person name="Yuan Z."/>
            <person name="Wen Y."/>
            <person name="Yao Z."/>
            <person name="Shen Y."/>
            <person name="Qiang B."/>
            <person name="Hou Y."/>
            <person name="Yu J."/>
            <person name="Jin Q."/>
        </authorList>
    </citation>
    <scope>NUCLEOTIDE SEQUENCE [LARGE SCALE GENOMIC DNA]</scope>
    <source>
        <strain>Sb227</strain>
    </source>
</reference>
<accession>Q31XF9</accession>
<sequence length="291" mass="33082">MTSSYLHFPEFDPVIFSIGPVALHWYGLMYLVGFIFAMWLATRRANRPGSGWTKNEVENLLYAGFLGVFLGGRIGYVLFYNFPQFMADPLYLFRVWDGGMSFHGGLIGVIVVMIIFARRTKRSFFQVSDFIAPLIPFGLGAGRLGNFINGELWGRVDPNFPFAMLFPGSRTEDILLLQTNPQWQSIFDTYGVLPRHPSQLYELLLEGVVLFIILNLYIRKPRPMGAVSGLFLIGYGAFRIIVEFFRQPDAQFTGAWVQYISMGQILSIPMIVAGVSMMVWAYRRSPQQHVS</sequence>
<evidence type="ECO:0000255" key="1">
    <source>
        <dbReference type="HAMAP-Rule" id="MF_01147"/>
    </source>
</evidence>
<organism>
    <name type="scientific">Shigella boydii serotype 4 (strain Sb227)</name>
    <dbReference type="NCBI Taxonomy" id="300268"/>
    <lineage>
        <taxon>Bacteria</taxon>
        <taxon>Pseudomonadati</taxon>
        <taxon>Pseudomonadota</taxon>
        <taxon>Gammaproteobacteria</taxon>
        <taxon>Enterobacterales</taxon>
        <taxon>Enterobacteriaceae</taxon>
        <taxon>Shigella</taxon>
    </lineage>
</organism>
<gene>
    <name evidence="1" type="primary">lgt</name>
    <name type="ordered locus">SBO_2720</name>
</gene>
<protein>
    <recommendedName>
        <fullName evidence="1">Phosphatidylglycerol--prolipoprotein diacylglyceryl transferase</fullName>
        <ecNumber evidence="1">2.5.1.145</ecNumber>
    </recommendedName>
</protein>
<feature type="chain" id="PRO_1000053497" description="Phosphatidylglycerol--prolipoprotein diacylglyceryl transferase">
    <location>
        <begin position="1"/>
        <end position="291"/>
    </location>
</feature>
<feature type="transmembrane region" description="Helical" evidence="1">
    <location>
        <begin position="21"/>
        <end position="41"/>
    </location>
</feature>
<feature type="transmembrane region" description="Helical" evidence="1">
    <location>
        <begin position="60"/>
        <end position="80"/>
    </location>
</feature>
<feature type="transmembrane region" description="Helical" evidence="1">
    <location>
        <begin position="96"/>
        <end position="116"/>
    </location>
</feature>
<feature type="transmembrane region" description="Helical" evidence="1">
    <location>
        <begin position="130"/>
        <end position="150"/>
    </location>
</feature>
<feature type="transmembrane region" description="Helical" evidence="1">
    <location>
        <begin position="198"/>
        <end position="218"/>
    </location>
</feature>
<feature type="transmembrane region" description="Helical" evidence="1">
    <location>
        <begin position="225"/>
        <end position="245"/>
    </location>
</feature>
<feature type="transmembrane region" description="Helical" evidence="1">
    <location>
        <begin position="260"/>
        <end position="280"/>
    </location>
</feature>
<feature type="binding site" evidence="1">
    <location>
        <position position="143"/>
    </location>
    <ligand>
        <name>a 1,2-diacyl-sn-glycero-3-phospho-(1'-sn-glycerol)</name>
        <dbReference type="ChEBI" id="CHEBI:64716"/>
    </ligand>
</feature>
<keyword id="KW-0997">Cell inner membrane</keyword>
<keyword id="KW-1003">Cell membrane</keyword>
<keyword id="KW-0472">Membrane</keyword>
<keyword id="KW-0808">Transferase</keyword>
<keyword id="KW-0812">Transmembrane</keyword>
<keyword id="KW-1133">Transmembrane helix</keyword>
<proteinExistence type="inferred from homology"/>